<protein>
    <recommendedName>
        <fullName>UDP-N-acetylmuramoylalanine--D-glutamate ligase</fullName>
        <ecNumber>6.3.2.9</ecNumber>
    </recommendedName>
    <alternativeName>
        <fullName>D-glutamic acid-adding enzyme</fullName>
    </alternativeName>
    <alternativeName>
        <fullName>UDP-N-acetylmuramoyl-L-alanyl-D-glutamate synthetase</fullName>
    </alternativeName>
</protein>
<gene>
    <name type="primary">murD</name>
    <name type="ordered locus">TP_0903</name>
</gene>
<keyword id="KW-0067">ATP-binding</keyword>
<keyword id="KW-0131">Cell cycle</keyword>
<keyword id="KW-0132">Cell division</keyword>
<keyword id="KW-0133">Cell shape</keyword>
<keyword id="KW-0961">Cell wall biogenesis/degradation</keyword>
<keyword id="KW-0963">Cytoplasm</keyword>
<keyword id="KW-0436">Ligase</keyword>
<keyword id="KW-0547">Nucleotide-binding</keyword>
<keyword id="KW-0573">Peptidoglycan synthesis</keyword>
<keyword id="KW-1185">Reference proteome</keyword>
<name>MURD_TREPA</name>
<organism>
    <name type="scientific">Treponema pallidum (strain Nichols)</name>
    <dbReference type="NCBI Taxonomy" id="243276"/>
    <lineage>
        <taxon>Bacteria</taxon>
        <taxon>Pseudomonadati</taxon>
        <taxon>Spirochaetota</taxon>
        <taxon>Spirochaetia</taxon>
        <taxon>Spirochaetales</taxon>
        <taxon>Treponemataceae</taxon>
        <taxon>Treponema</taxon>
    </lineage>
</organism>
<reference key="1">
    <citation type="journal article" date="1998" name="Science">
        <title>Complete genome sequence of Treponema pallidum, the syphilis spirochete.</title>
        <authorList>
            <person name="Fraser C.M."/>
            <person name="Norris S.J."/>
            <person name="Weinstock G.M."/>
            <person name="White O."/>
            <person name="Sutton G.G."/>
            <person name="Dodson R.J."/>
            <person name="Gwinn M.L."/>
            <person name="Hickey E.K."/>
            <person name="Clayton R.A."/>
            <person name="Ketchum K.A."/>
            <person name="Sodergren E."/>
            <person name="Hardham J.M."/>
            <person name="McLeod M.P."/>
            <person name="Salzberg S.L."/>
            <person name="Peterson J.D."/>
            <person name="Khalak H.G."/>
            <person name="Richardson D.L."/>
            <person name="Howell J.K."/>
            <person name="Chidambaram M."/>
            <person name="Utterback T.R."/>
            <person name="McDonald L.A."/>
            <person name="Artiach P."/>
            <person name="Bowman C."/>
            <person name="Cotton M.D."/>
            <person name="Fujii C."/>
            <person name="Garland S.A."/>
            <person name="Hatch B."/>
            <person name="Horst K."/>
            <person name="Roberts K.M."/>
            <person name="Sandusky M."/>
            <person name="Weidman J.F."/>
            <person name="Smith H.O."/>
            <person name="Venter J.C."/>
        </authorList>
    </citation>
    <scope>NUCLEOTIDE SEQUENCE [LARGE SCALE GENOMIC DNA]</scope>
    <source>
        <strain>Nichols</strain>
    </source>
</reference>
<proteinExistence type="inferred from homology"/>
<accession>O83873</accession>
<sequence length="532" mass="57848">MEQARALLQGKTVTIMGLGVHGGGCAAACFCAEAGARLTVTDLRNADALTPSLKRLRAYPSIRFTLGEHRLEDFENAHVVIKNPIVKGAHNIYLSAAQRAGARIETDISLFLRLSPAPLLAVSGSKGKSSTASALCYSLRALGFPAFLGGNSTVSPLEFVRHTTPATPVVLELSSWQLADLRAVDAQDHTVHHAGLLRPEIAIMTPIMADHQNWYADMESYVADKQVLYAHQGTHDTLLCNADDGWGPRFACEAQKNGVRVFWYTAQSPETACRACTPRLMERALWRATDGTYWARFAEGDRACMLIPPQLHVPGRVLQTQVASAALAALLFAQRHSLPPSSCPPCFCAHSHSPAYANHASPPDYACPSAHSPFQEHTRRLAQALESYTGIEHRLEFFYEKGGLRFYNDSASTVPEATIAALEAFDESVVLIVGGTDKNADYQPLAQAAAKAHALYLLAGSATARLQPLLHAAQVPFYGPFTSLEVLLQDLRARQKSPGVIVFSPGAASFELFAHEFERGTTFKSQVRIIFE</sequence>
<evidence type="ECO:0000250" key="1"/>
<evidence type="ECO:0000255" key="2"/>
<evidence type="ECO:0000305" key="3"/>
<comment type="function">
    <text evidence="1">Cell wall formation. Catalyzes the addition of glutamate to the nucleotide precursor UDP-N-acetylmuramoyl-L-alanine (UMA).</text>
</comment>
<comment type="catalytic activity">
    <reaction>
        <text>UDP-N-acetyl-alpha-D-muramoyl-L-alanine + D-glutamate + ATP = UDP-N-acetyl-alpha-D-muramoyl-L-alanyl-D-glutamate + ADP + phosphate + H(+)</text>
        <dbReference type="Rhea" id="RHEA:16429"/>
        <dbReference type="ChEBI" id="CHEBI:15378"/>
        <dbReference type="ChEBI" id="CHEBI:29986"/>
        <dbReference type="ChEBI" id="CHEBI:30616"/>
        <dbReference type="ChEBI" id="CHEBI:43474"/>
        <dbReference type="ChEBI" id="CHEBI:83898"/>
        <dbReference type="ChEBI" id="CHEBI:83900"/>
        <dbReference type="ChEBI" id="CHEBI:456216"/>
        <dbReference type="EC" id="6.3.2.9"/>
    </reaction>
</comment>
<comment type="pathway">
    <text>Cell wall biogenesis; peptidoglycan biosynthesis.</text>
</comment>
<comment type="subcellular location">
    <subcellularLocation>
        <location evidence="1">Cytoplasm</location>
    </subcellularLocation>
</comment>
<comment type="similarity">
    <text evidence="3">Belongs to the MurCDEF family.</text>
</comment>
<dbReference type="EC" id="6.3.2.9"/>
<dbReference type="EMBL" id="AE000520">
    <property type="protein sequence ID" value="AAC65856.1"/>
    <property type="molecule type" value="Genomic_DNA"/>
</dbReference>
<dbReference type="PIR" id="D71267">
    <property type="entry name" value="D71267"/>
</dbReference>
<dbReference type="RefSeq" id="WP_010882346.1">
    <property type="nucleotide sequence ID" value="NC_021490.2"/>
</dbReference>
<dbReference type="SMR" id="O83873"/>
<dbReference type="IntAct" id="O83873">
    <property type="interactions" value="19"/>
</dbReference>
<dbReference type="STRING" id="243276.TP_0903"/>
<dbReference type="EnsemblBacteria" id="AAC65856">
    <property type="protein sequence ID" value="AAC65856"/>
    <property type="gene ID" value="TP_0903"/>
</dbReference>
<dbReference type="GeneID" id="93876655"/>
<dbReference type="KEGG" id="tpa:TP_0903"/>
<dbReference type="KEGG" id="tpw:TPANIC_0903"/>
<dbReference type="eggNOG" id="COG0771">
    <property type="taxonomic scope" value="Bacteria"/>
</dbReference>
<dbReference type="HOGENOM" id="CLU_032540_0_1_12"/>
<dbReference type="OrthoDB" id="9809796at2"/>
<dbReference type="UniPathway" id="UPA00219"/>
<dbReference type="Proteomes" id="UP000000811">
    <property type="component" value="Chromosome"/>
</dbReference>
<dbReference type="GO" id="GO:0005737">
    <property type="term" value="C:cytoplasm"/>
    <property type="evidence" value="ECO:0007669"/>
    <property type="project" value="UniProtKB-SubCell"/>
</dbReference>
<dbReference type="GO" id="GO:0005524">
    <property type="term" value="F:ATP binding"/>
    <property type="evidence" value="ECO:0007669"/>
    <property type="project" value="UniProtKB-UniRule"/>
</dbReference>
<dbReference type="GO" id="GO:0008764">
    <property type="term" value="F:UDP-N-acetylmuramoylalanine-D-glutamate ligase activity"/>
    <property type="evidence" value="ECO:0007669"/>
    <property type="project" value="UniProtKB-UniRule"/>
</dbReference>
<dbReference type="GO" id="GO:0051301">
    <property type="term" value="P:cell division"/>
    <property type="evidence" value="ECO:0007669"/>
    <property type="project" value="UniProtKB-KW"/>
</dbReference>
<dbReference type="GO" id="GO:0071555">
    <property type="term" value="P:cell wall organization"/>
    <property type="evidence" value="ECO:0007669"/>
    <property type="project" value="UniProtKB-KW"/>
</dbReference>
<dbReference type="GO" id="GO:0009252">
    <property type="term" value="P:peptidoglycan biosynthetic process"/>
    <property type="evidence" value="ECO:0007669"/>
    <property type="project" value="UniProtKB-UniRule"/>
</dbReference>
<dbReference type="GO" id="GO:0008360">
    <property type="term" value="P:regulation of cell shape"/>
    <property type="evidence" value="ECO:0007669"/>
    <property type="project" value="UniProtKB-KW"/>
</dbReference>
<dbReference type="Gene3D" id="3.90.190.20">
    <property type="entry name" value="Mur ligase, C-terminal domain"/>
    <property type="match status" value="1"/>
</dbReference>
<dbReference type="Gene3D" id="3.40.1190.10">
    <property type="entry name" value="Mur-like, catalytic domain"/>
    <property type="match status" value="1"/>
</dbReference>
<dbReference type="Gene3D" id="3.40.50.720">
    <property type="entry name" value="NAD(P)-binding Rossmann-like Domain"/>
    <property type="match status" value="1"/>
</dbReference>
<dbReference type="HAMAP" id="MF_00639">
    <property type="entry name" value="MurD"/>
    <property type="match status" value="1"/>
</dbReference>
<dbReference type="InterPro" id="IPR036565">
    <property type="entry name" value="Mur-like_cat_sf"/>
</dbReference>
<dbReference type="InterPro" id="IPR004101">
    <property type="entry name" value="Mur_ligase_C"/>
</dbReference>
<dbReference type="InterPro" id="IPR036615">
    <property type="entry name" value="Mur_ligase_C_dom_sf"/>
</dbReference>
<dbReference type="InterPro" id="IPR013221">
    <property type="entry name" value="Mur_ligase_cen"/>
</dbReference>
<dbReference type="InterPro" id="IPR005762">
    <property type="entry name" value="MurD"/>
</dbReference>
<dbReference type="NCBIfam" id="TIGR01087">
    <property type="entry name" value="murD"/>
    <property type="match status" value="1"/>
</dbReference>
<dbReference type="PANTHER" id="PTHR43692">
    <property type="entry name" value="UDP-N-ACETYLMURAMOYLALANINE--D-GLUTAMATE LIGASE"/>
    <property type="match status" value="1"/>
</dbReference>
<dbReference type="PANTHER" id="PTHR43692:SF1">
    <property type="entry name" value="UDP-N-ACETYLMURAMOYLALANINE--D-GLUTAMATE LIGASE"/>
    <property type="match status" value="1"/>
</dbReference>
<dbReference type="Pfam" id="PF02875">
    <property type="entry name" value="Mur_ligase_C"/>
    <property type="match status" value="1"/>
</dbReference>
<dbReference type="Pfam" id="PF08245">
    <property type="entry name" value="Mur_ligase_M"/>
    <property type="match status" value="1"/>
</dbReference>
<dbReference type="SUPFAM" id="SSF51984">
    <property type="entry name" value="MurCD N-terminal domain"/>
    <property type="match status" value="1"/>
</dbReference>
<dbReference type="SUPFAM" id="SSF53623">
    <property type="entry name" value="MurD-like peptide ligases, catalytic domain"/>
    <property type="match status" value="1"/>
</dbReference>
<dbReference type="SUPFAM" id="SSF53244">
    <property type="entry name" value="MurD-like peptide ligases, peptide-binding domain"/>
    <property type="match status" value="1"/>
</dbReference>
<feature type="chain" id="PRO_0000109116" description="UDP-N-acetylmuramoylalanine--D-glutamate ligase">
    <location>
        <begin position="1"/>
        <end position="532"/>
    </location>
</feature>
<feature type="binding site" evidence="2">
    <location>
        <begin position="124"/>
        <end position="130"/>
    </location>
    <ligand>
        <name>ATP</name>
        <dbReference type="ChEBI" id="CHEBI:30616"/>
    </ligand>
</feature>